<organism>
    <name type="scientific">Edwardsiella ictaluri (strain 93-146)</name>
    <dbReference type="NCBI Taxonomy" id="634503"/>
    <lineage>
        <taxon>Bacteria</taxon>
        <taxon>Pseudomonadati</taxon>
        <taxon>Pseudomonadota</taxon>
        <taxon>Gammaproteobacteria</taxon>
        <taxon>Enterobacterales</taxon>
        <taxon>Hafniaceae</taxon>
        <taxon>Edwardsiella</taxon>
    </lineage>
</organism>
<proteinExistence type="inferred from homology"/>
<reference key="1">
    <citation type="submission" date="2009-03" db="EMBL/GenBank/DDBJ databases">
        <title>Complete genome sequence of Edwardsiella ictaluri 93-146.</title>
        <authorList>
            <person name="Williams M.L."/>
            <person name="Gillaspy A.F."/>
            <person name="Dyer D.W."/>
            <person name="Thune R.L."/>
            <person name="Waldbieser G.C."/>
            <person name="Schuster S.C."/>
            <person name="Gipson J."/>
            <person name="Zaitshik J."/>
            <person name="Landry C."/>
            <person name="Lawrence M.L."/>
        </authorList>
    </citation>
    <scope>NUCLEOTIDE SEQUENCE [LARGE SCALE GENOMIC DNA]</scope>
    <source>
        <strain>93-146</strain>
    </source>
</reference>
<gene>
    <name evidence="1" type="primary">rpsF</name>
    <name type="ordered locus">NT01EI_0425</name>
</gene>
<protein>
    <recommendedName>
        <fullName evidence="1">Small ribosomal subunit protein bS6</fullName>
    </recommendedName>
    <alternativeName>
        <fullName evidence="3">30S ribosomal protein S6</fullName>
    </alternativeName>
</protein>
<name>RS6_EDWI9</name>
<feature type="chain" id="PRO_1000205396" description="Small ribosomal subunit protein bS6">
    <location>
        <begin position="1"/>
        <end position="131"/>
    </location>
</feature>
<feature type="region of interest" description="Disordered" evidence="2">
    <location>
        <begin position="98"/>
        <end position="131"/>
    </location>
</feature>
<feature type="compositionally biased region" description="Basic and acidic residues" evidence="2">
    <location>
        <begin position="104"/>
        <end position="116"/>
    </location>
</feature>
<feature type="compositionally biased region" description="Acidic residues" evidence="2">
    <location>
        <begin position="120"/>
        <end position="131"/>
    </location>
</feature>
<keyword id="KW-0687">Ribonucleoprotein</keyword>
<keyword id="KW-0689">Ribosomal protein</keyword>
<keyword id="KW-0694">RNA-binding</keyword>
<keyword id="KW-0699">rRNA-binding</keyword>
<dbReference type="EMBL" id="CP001600">
    <property type="protein sequence ID" value="ACR67663.1"/>
    <property type="molecule type" value="Genomic_DNA"/>
</dbReference>
<dbReference type="RefSeq" id="WP_015869867.1">
    <property type="nucleotide sequence ID" value="NZ_CP169062.1"/>
</dbReference>
<dbReference type="SMR" id="C5BF77"/>
<dbReference type="STRING" id="67780.B6E78_12890"/>
<dbReference type="GeneID" id="69537513"/>
<dbReference type="KEGG" id="eic:NT01EI_0425"/>
<dbReference type="PATRIC" id="fig|634503.3.peg.383"/>
<dbReference type="HOGENOM" id="CLU_113441_6_1_6"/>
<dbReference type="OrthoDB" id="9812702at2"/>
<dbReference type="Proteomes" id="UP000001485">
    <property type="component" value="Chromosome"/>
</dbReference>
<dbReference type="GO" id="GO:0022627">
    <property type="term" value="C:cytosolic small ribosomal subunit"/>
    <property type="evidence" value="ECO:0007669"/>
    <property type="project" value="TreeGrafter"/>
</dbReference>
<dbReference type="GO" id="GO:0070181">
    <property type="term" value="F:small ribosomal subunit rRNA binding"/>
    <property type="evidence" value="ECO:0007669"/>
    <property type="project" value="TreeGrafter"/>
</dbReference>
<dbReference type="GO" id="GO:0003735">
    <property type="term" value="F:structural constituent of ribosome"/>
    <property type="evidence" value="ECO:0007669"/>
    <property type="project" value="InterPro"/>
</dbReference>
<dbReference type="GO" id="GO:0006412">
    <property type="term" value="P:translation"/>
    <property type="evidence" value="ECO:0007669"/>
    <property type="project" value="UniProtKB-UniRule"/>
</dbReference>
<dbReference type="CDD" id="cd00473">
    <property type="entry name" value="bS6"/>
    <property type="match status" value="1"/>
</dbReference>
<dbReference type="FunFam" id="3.30.70.60:FF:000003">
    <property type="entry name" value="30S ribosomal protein S6"/>
    <property type="match status" value="1"/>
</dbReference>
<dbReference type="Gene3D" id="3.30.70.60">
    <property type="match status" value="1"/>
</dbReference>
<dbReference type="HAMAP" id="MF_00360">
    <property type="entry name" value="Ribosomal_bS6"/>
    <property type="match status" value="1"/>
</dbReference>
<dbReference type="InterPro" id="IPR000529">
    <property type="entry name" value="Ribosomal_bS6"/>
</dbReference>
<dbReference type="InterPro" id="IPR020815">
    <property type="entry name" value="Ribosomal_bS6_CS"/>
</dbReference>
<dbReference type="InterPro" id="IPR035980">
    <property type="entry name" value="Ribosomal_bS6_sf"/>
</dbReference>
<dbReference type="InterPro" id="IPR020814">
    <property type="entry name" value="Ribosomal_S6_plastid/chlpt"/>
</dbReference>
<dbReference type="InterPro" id="IPR014717">
    <property type="entry name" value="Transl_elong_EF1B/ribsomal_bS6"/>
</dbReference>
<dbReference type="NCBIfam" id="TIGR00166">
    <property type="entry name" value="S6"/>
    <property type="match status" value="1"/>
</dbReference>
<dbReference type="PANTHER" id="PTHR21011">
    <property type="entry name" value="MITOCHONDRIAL 28S RIBOSOMAL PROTEIN S6"/>
    <property type="match status" value="1"/>
</dbReference>
<dbReference type="PANTHER" id="PTHR21011:SF1">
    <property type="entry name" value="SMALL RIBOSOMAL SUBUNIT PROTEIN BS6M"/>
    <property type="match status" value="1"/>
</dbReference>
<dbReference type="Pfam" id="PF01250">
    <property type="entry name" value="Ribosomal_S6"/>
    <property type="match status" value="1"/>
</dbReference>
<dbReference type="SUPFAM" id="SSF54995">
    <property type="entry name" value="Ribosomal protein S6"/>
    <property type="match status" value="1"/>
</dbReference>
<dbReference type="PROSITE" id="PS01048">
    <property type="entry name" value="RIBOSOMAL_S6"/>
    <property type="match status" value="1"/>
</dbReference>
<evidence type="ECO:0000255" key="1">
    <source>
        <dbReference type="HAMAP-Rule" id="MF_00360"/>
    </source>
</evidence>
<evidence type="ECO:0000256" key="2">
    <source>
        <dbReference type="SAM" id="MobiDB-lite"/>
    </source>
</evidence>
<evidence type="ECO:0000305" key="3"/>
<sequence length="131" mass="15270">MRHYEIVFMVHPDQSEQVPGMIERYTGAITGAEGKIHRLEDWGRRQLAYSINKLHKAHYVLMNVEASQEVIDELETNFRYNDAVIRSMVMRTKHAVTEASPMVKAKDERRERREDFANETSEETEAGDSEE</sequence>
<comment type="function">
    <text evidence="1">Binds together with bS18 to 16S ribosomal RNA.</text>
</comment>
<comment type="similarity">
    <text evidence="1">Belongs to the bacterial ribosomal protein bS6 family.</text>
</comment>
<accession>C5BF77</accession>